<keyword id="KW-0002">3D-structure</keyword>
<keyword id="KW-0007">Acetylation</keyword>
<keyword id="KW-0037">Angiogenesis</keyword>
<keyword id="KW-0067">ATP-binding</keyword>
<keyword id="KW-1003">Cell membrane</keyword>
<keyword id="KW-0963">Cytoplasm</keyword>
<keyword id="KW-0256">Endoplasmic reticulum</keyword>
<keyword id="KW-0436">Ligase</keyword>
<keyword id="KW-0449">Lipoprotein</keyword>
<keyword id="KW-0460">Magnesium</keyword>
<keyword id="KW-0464">Manganese</keyword>
<keyword id="KW-0472">Membrane</keyword>
<keyword id="KW-0479">Metal-binding</keyword>
<keyword id="KW-0492">Microsome</keyword>
<keyword id="KW-0496">Mitochondrion</keyword>
<keyword id="KW-0547">Nucleotide-binding</keyword>
<keyword id="KW-0564">Palmitate</keyword>
<keyword id="KW-0597">Phosphoprotein</keyword>
<keyword id="KW-1185">Reference proteome</keyword>
<keyword id="KW-0808">Transferase</keyword>
<keyword id="KW-0832">Ubl conjugation</keyword>
<evidence type="ECO:0000250" key="1">
    <source>
        <dbReference type="UniProtKB" id="P09606"/>
    </source>
</evidence>
<evidence type="ECO:0000250" key="2">
    <source>
        <dbReference type="UniProtKB" id="P15104"/>
    </source>
</evidence>
<evidence type="ECO:0000250" key="3">
    <source>
        <dbReference type="UniProtKB" id="P15105"/>
    </source>
</evidence>
<evidence type="ECO:0000250" key="4">
    <source>
        <dbReference type="UniProtKB" id="P9WN39"/>
    </source>
</evidence>
<evidence type="ECO:0000255" key="5">
    <source>
        <dbReference type="PROSITE-ProRule" id="PRU01330"/>
    </source>
</evidence>
<evidence type="ECO:0000255" key="6">
    <source>
        <dbReference type="PROSITE-ProRule" id="PRU01331"/>
    </source>
</evidence>
<evidence type="ECO:0000269" key="7">
    <source>
    </source>
</evidence>
<evidence type="ECO:0000303" key="8">
    <source>
    </source>
</evidence>
<evidence type="ECO:0000305" key="9"/>
<evidence type="ECO:0007744" key="10">
    <source>
        <dbReference type="PDB" id="8ECY"/>
    </source>
</evidence>
<evidence type="ECO:0007829" key="11">
    <source>
        <dbReference type="PDB" id="8ECY"/>
    </source>
</evidence>
<accession>P15103</accession>
<accession>O02850</accession>
<accession>Q3ZBU6</accession>
<accession>Q866Q7</accession>
<dbReference type="EC" id="6.3.1.2" evidence="2"/>
<dbReference type="EC" id="2.3.1.225" evidence="2"/>
<dbReference type="EMBL" id="BC103099">
    <property type="protein sequence ID" value="AAI03100.1"/>
    <property type="molecule type" value="mRNA"/>
</dbReference>
<dbReference type="EMBL" id="Y10347">
    <property type="protein sequence ID" value="CAA71373.1"/>
    <property type="status" value="ALT_SEQ"/>
    <property type="molecule type" value="Genomic_DNA"/>
</dbReference>
<dbReference type="EMBL" id="AY186585">
    <property type="protein sequence ID" value="AAO27470.1"/>
    <property type="molecule type" value="mRNA"/>
</dbReference>
<dbReference type="EMBL" id="J03604">
    <property type="protein sequence ID" value="AAA87357.1"/>
    <property type="molecule type" value="mRNA"/>
</dbReference>
<dbReference type="PIR" id="A34006">
    <property type="entry name" value="A34006"/>
</dbReference>
<dbReference type="RefSeq" id="NP_001035564.1">
    <property type="nucleotide sequence ID" value="NM_001040474.2"/>
</dbReference>
<dbReference type="RefSeq" id="XP_005217320.1">
    <property type="nucleotide sequence ID" value="XM_005217263.5"/>
</dbReference>
<dbReference type="RefSeq" id="XP_024831774.1">
    <property type="nucleotide sequence ID" value="XM_024976006.2"/>
</dbReference>
<dbReference type="PDB" id="7U5N">
    <property type="method" value="EM"/>
    <property type="resolution" value="2.58 A"/>
    <property type="chains" value="A/B/C/D/E/F/G/H/I/J=1-373"/>
</dbReference>
<dbReference type="PDB" id="8ECY">
    <property type="method" value="EM"/>
    <property type="resolution" value="2.00 A"/>
    <property type="chains" value="A/B/D/F/H/I/J/L/M/Q=1-373"/>
</dbReference>
<dbReference type="PDBsum" id="7U5N"/>
<dbReference type="PDBsum" id="8ECY"/>
<dbReference type="EMDB" id="EMD-26356"/>
<dbReference type="EMDB" id="EMD-28025"/>
<dbReference type="SMR" id="P15103"/>
<dbReference type="FunCoup" id="P15103">
    <property type="interactions" value="2073"/>
</dbReference>
<dbReference type="STRING" id="9913.ENSBTAP00000057244"/>
<dbReference type="PaxDb" id="9913-ENSBTAP00000038301"/>
<dbReference type="Ensembl" id="ENSBTAT00000038488.6">
    <property type="protein sequence ID" value="ENSBTAP00000038301.4"/>
    <property type="gene ID" value="ENSBTAG00000013631.7"/>
</dbReference>
<dbReference type="GeneID" id="281199"/>
<dbReference type="KEGG" id="bta:281199"/>
<dbReference type="CTD" id="2752"/>
<dbReference type="VEuPathDB" id="HostDB:ENSBTAG00000013631"/>
<dbReference type="VGNC" id="VGNC:29426">
    <property type="gene designation" value="GLUL"/>
</dbReference>
<dbReference type="eggNOG" id="KOG0683">
    <property type="taxonomic scope" value="Eukaryota"/>
</dbReference>
<dbReference type="GeneTree" id="ENSGT00390000010047"/>
<dbReference type="HOGENOM" id="CLU_036762_1_1_1"/>
<dbReference type="InParanoid" id="P15103"/>
<dbReference type="OMA" id="DRRPNAN"/>
<dbReference type="OrthoDB" id="1936100at2759"/>
<dbReference type="TreeFam" id="TF300491"/>
<dbReference type="Reactome" id="R-BTA-210455">
    <property type="pathway name" value="Astrocytic Glutamate-Glutamine Uptake And Metabolism"/>
</dbReference>
<dbReference type="Reactome" id="R-BTA-8964539">
    <property type="pathway name" value="Glutamate and glutamine metabolism"/>
</dbReference>
<dbReference type="Proteomes" id="UP000009136">
    <property type="component" value="Chromosome 16"/>
</dbReference>
<dbReference type="Bgee" id="ENSBTAG00000013631">
    <property type="expression patterns" value="Expressed in prefrontal cortex and 104 other cell types or tissues"/>
</dbReference>
<dbReference type="GO" id="GO:0005737">
    <property type="term" value="C:cytoplasm"/>
    <property type="evidence" value="ECO:0000318"/>
    <property type="project" value="GO_Central"/>
</dbReference>
<dbReference type="GO" id="GO:0005829">
    <property type="term" value="C:cytosol"/>
    <property type="evidence" value="ECO:0000250"/>
    <property type="project" value="UniProtKB"/>
</dbReference>
<dbReference type="GO" id="GO:0005783">
    <property type="term" value="C:endoplasmic reticulum"/>
    <property type="evidence" value="ECO:0007669"/>
    <property type="project" value="UniProtKB-KW"/>
</dbReference>
<dbReference type="GO" id="GO:0005739">
    <property type="term" value="C:mitochondrion"/>
    <property type="evidence" value="ECO:0007669"/>
    <property type="project" value="UniProtKB-SubCell"/>
</dbReference>
<dbReference type="GO" id="GO:0005886">
    <property type="term" value="C:plasma membrane"/>
    <property type="evidence" value="ECO:0000250"/>
    <property type="project" value="UniProtKB"/>
</dbReference>
<dbReference type="GO" id="GO:0005524">
    <property type="term" value="F:ATP binding"/>
    <property type="evidence" value="ECO:0007669"/>
    <property type="project" value="UniProtKB-KW"/>
</dbReference>
<dbReference type="GO" id="GO:0004356">
    <property type="term" value="F:glutamine synthetase activity"/>
    <property type="evidence" value="ECO:0000250"/>
    <property type="project" value="UniProtKB"/>
</dbReference>
<dbReference type="GO" id="GO:0046872">
    <property type="term" value="F:metal ion binding"/>
    <property type="evidence" value="ECO:0007669"/>
    <property type="project" value="UniProtKB-KW"/>
</dbReference>
<dbReference type="GO" id="GO:0019706">
    <property type="term" value="F:protein-cysteine S-palmitoyltransferase activity"/>
    <property type="evidence" value="ECO:0000250"/>
    <property type="project" value="UniProtKB"/>
</dbReference>
<dbReference type="GO" id="GO:0001525">
    <property type="term" value="P:angiogenesis"/>
    <property type="evidence" value="ECO:0007669"/>
    <property type="project" value="UniProtKB-KW"/>
</dbReference>
<dbReference type="GO" id="GO:0006542">
    <property type="term" value="P:glutamine biosynthetic process"/>
    <property type="evidence" value="ECO:0000318"/>
    <property type="project" value="GO_Central"/>
</dbReference>
<dbReference type="GO" id="GO:0097275">
    <property type="term" value="P:intracellular ammonium homeostasis"/>
    <property type="evidence" value="ECO:0000250"/>
    <property type="project" value="UniProtKB"/>
</dbReference>
<dbReference type="GO" id="GO:0045648">
    <property type="term" value="P:positive regulation of erythrocyte differentiation"/>
    <property type="evidence" value="ECO:0000250"/>
    <property type="project" value="UniProtKB"/>
</dbReference>
<dbReference type="GO" id="GO:0018345">
    <property type="term" value="P:protein palmitoylation"/>
    <property type="evidence" value="ECO:0000250"/>
    <property type="project" value="UniProtKB"/>
</dbReference>
<dbReference type="GO" id="GO:0010594">
    <property type="term" value="P:regulation of endothelial cell migration"/>
    <property type="evidence" value="ECO:0000250"/>
    <property type="project" value="UniProtKB"/>
</dbReference>
<dbReference type="GO" id="GO:1903670">
    <property type="term" value="P:regulation of sprouting angiogenesis"/>
    <property type="evidence" value="ECO:0000250"/>
    <property type="project" value="UniProtKB"/>
</dbReference>
<dbReference type="FunFam" id="3.10.20.70:FF:000004">
    <property type="entry name" value="Glutamine synthetase"/>
    <property type="match status" value="1"/>
</dbReference>
<dbReference type="FunFam" id="3.30.590.10:FF:000011">
    <property type="entry name" value="Glutamine synthetase"/>
    <property type="match status" value="1"/>
</dbReference>
<dbReference type="Gene3D" id="3.10.20.70">
    <property type="entry name" value="Glutamine synthetase, N-terminal domain"/>
    <property type="match status" value="1"/>
</dbReference>
<dbReference type="Gene3D" id="3.30.590.10">
    <property type="entry name" value="Glutamine synthetase/guanido kinase, catalytic domain"/>
    <property type="match status" value="2"/>
</dbReference>
<dbReference type="InterPro" id="IPR008147">
    <property type="entry name" value="Gln_synt_N"/>
</dbReference>
<dbReference type="InterPro" id="IPR036651">
    <property type="entry name" value="Gln_synt_N_sf"/>
</dbReference>
<dbReference type="InterPro" id="IPR014746">
    <property type="entry name" value="Gln_synth/guanido_kin_cat_dom"/>
</dbReference>
<dbReference type="InterPro" id="IPR008146">
    <property type="entry name" value="Gln_synth_cat_dom"/>
</dbReference>
<dbReference type="InterPro" id="IPR027303">
    <property type="entry name" value="Gln_synth_gly_rich_site"/>
</dbReference>
<dbReference type="InterPro" id="IPR027302">
    <property type="entry name" value="Gln_synth_N_conserv_site"/>
</dbReference>
<dbReference type="InterPro" id="IPR050292">
    <property type="entry name" value="Glutamine_Synthetase"/>
</dbReference>
<dbReference type="PANTHER" id="PTHR20852">
    <property type="entry name" value="GLUTAMINE SYNTHETASE"/>
    <property type="match status" value="1"/>
</dbReference>
<dbReference type="PANTHER" id="PTHR20852:SF45">
    <property type="entry name" value="GLUTAMINE SYNTHETASE"/>
    <property type="match status" value="1"/>
</dbReference>
<dbReference type="Pfam" id="PF00120">
    <property type="entry name" value="Gln-synt_C"/>
    <property type="match status" value="1"/>
</dbReference>
<dbReference type="Pfam" id="PF03951">
    <property type="entry name" value="Gln-synt_N"/>
    <property type="match status" value="1"/>
</dbReference>
<dbReference type="SMART" id="SM01230">
    <property type="entry name" value="Gln-synt_C"/>
    <property type="match status" value="1"/>
</dbReference>
<dbReference type="SUPFAM" id="SSF54368">
    <property type="entry name" value="Glutamine synthetase, N-terminal domain"/>
    <property type="match status" value="1"/>
</dbReference>
<dbReference type="SUPFAM" id="SSF55931">
    <property type="entry name" value="Glutamine synthetase/guanido kinase"/>
    <property type="match status" value="1"/>
</dbReference>
<dbReference type="PROSITE" id="PS00180">
    <property type="entry name" value="GLNA_1"/>
    <property type="match status" value="1"/>
</dbReference>
<dbReference type="PROSITE" id="PS00181">
    <property type="entry name" value="GLNA_ATP"/>
    <property type="match status" value="1"/>
</dbReference>
<dbReference type="PROSITE" id="PS51986">
    <property type="entry name" value="GS_BETA_GRASP"/>
    <property type="match status" value="1"/>
</dbReference>
<dbReference type="PROSITE" id="PS51987">
    <property type="entry name" value="GS_CATALYTIC"/>
    <property type="match status" value="1"/>
</dbReference>
<sequence length="373" mass="42031">MATSASSHLNKGIKQVYMALPQGDKVQAMYIWIDGTGEGLRCKTRTLDSEPKCIEELPEWNFDGSSTFQSEGSNSDMYLVPAAMFRDPFRKDPNKLVFCEVFKYNRKPAETNLRHTCKRIMDMVSNQRPWFGMEQEYTLMGTDGHPFGWPSNGFPGPQGPYYCGVGADKAYGRDIVEAHYRACLYAGIKIGGTNAEVMPAQWEFQIGPCEGIDMGDHLWVARFILHRVCEDFGVIATFDPKPIPGNWNGAGCHTNFSTKAMREENGLKYIEEAIEKLSKRHQYHIRAYDPKGGLDNARRLTGFHETSNINDFSAGVANRGASIRIPRTVGQEKKGYFEDRRPSANCDPFAVTEALIRTCLLNETGDEPFQYKN</sequence>
<reference key="1">
    <citation type="submission" date="2005-08" db="EMBL/GenBank/DDBJ databases">
        <authorList>
            <consortium name="NIH - Mammalian Gene Collection (MGC) project"/>
        </authorList>
    </citation>
    <scope>NUCLEOTIDE SEQUENCE [LARGE SCALE MRNA]</scope>
    <source>
        <strain>Hereford</strain>
        <tissue>Hypothalamus</tissue>
    </source>
</reference>
<reference key="2">
    <citation type="journal article" date="1997" name="Mamm. Genome">
        <title>The bovine glutamine synthase gene (GLUL) maps to 10q33 and a pseudogene (GLULP) to 16q21.</title>
        <authorList>
            <person name="Masabanda J."/>
            <person name="Wigger G."/>
            <person name="Eggen A."/>
            <person name="Stranzinger G."/>
            <person name="Fries R."/>
        </authorList>
    </citation>
    <scope>NUCLEOTIDE SEQUENCE [GENOMIC DNA] OF 202-267</scope>
</reference>
<reference key="3">
    <citation type="submission" date="2002-11" db="EMBL/GenBank/DDBJ databases">
        <title>The pattern of EAAC1 and GLT-1 glutamate transporter expression by skeletal and adipose tissues of fattening cattle differs from that of glutamine synthetase.</title>
        <authorList>
            <person name="Matthews J.C."/>
            <person name="Etienne N.M.P."/>
        </authorList>
    </citation>
    <scope>NUCLEOTIDE SEQUENCE [MRNA] OF 258-352</scope>
    <source>
        <tissue>Kidney</tissue>
    </source>
</reference>
<reference key="4">
    <citation type="journal article" date="1988" name="Proc. Natl. Acad. Sci. U.S.A.">
        <title>Distribution of glutamine synthetase and carbamoyl-phosphate synthetase I in vertebrate liver.</title>
        <authorList>
            <person name="Smith D.D. Jr."/>
            <person name="Campbell J.W."/>
        </authorList>
    </citation>
    <scope>NUCLEOTIDE SEQUENCE [MRNA] OF 267-373</scope>
    <source>
        <tissue>Liver</tissue>
    </source>
</reference>
<reference evidence="10" key="5">
    <citation type="journal article" date="2022" name="Nature">
        <title>Bestrophin-2 and glutamine synthetase form a complex for glutamate release.</title>
        <authorList>
            <person name="Owji A.P."/>
            <person name="Yu K."/>
            <person name="Kittredge A."/>
            <person name="Wang J."/>
            <person name="Zhang Y."/>
            <person name="Yang T."/>
        </authorList>
    </citation>
    <scope>STRUCTURE BY ELECTRON MICROSCOPY (2.00 ANGSTROMS) IN COMPLEX WITH BEST2</scope>
    <scope>SUBUNIT</scope>
</reference>
<comment type="function">
    <text evidence="2 3">Glutamine synthetase that catalyzes the ATP-dependent conversion of glutamate and ammonia to glutamine. Its role depends on tissue localization: in the brain, it regulates the levels of toxic ammonia and converts neurotoxic glutamate to harmless glutamine, whereas in the liver, it is one of the enzymes responsible for the removal of ammonia. Plays a key role in ammonium detoxification during erythropoiesis: the glutamine synthetase activity is required to remove ammonium generated by porphobilinogen deaminase (HMBS) during heme biosynthesis to prevent ammonium accumulation and oxidative stress (By similarity). Essential for proliferation of fetal skin fibroblasts (By similarity). Independently of its glutamine synthetase activity, required for endothelial cell migration during vascular development (By similarity). Involved in angiogenesis by regulating membrane localization and activation of the GTPase RHOJ, possibly by promoting RHOJ palmitoylation. May act as a palmitoyltransferase for RHOJ: able to autopalmitoylate and then transfer the palmitoyl group to RHOJ. Plays a role in ribosomal 40S subunit biogenesis. Through the interaction with BEST2, inhibits BEST2 channel activity by affecting the gating at the aperture in the absence of intracellular L-glutamate, but sensitizes BEST2 to intracellular L-glutamate, which promotes the opening of BEST2 and thus relieves its inhibitory effect on BEST2 (By similarity).</text>
</comment>
<comment type="catalytic activity">
    <reaction evidence="2">
        <text>L-glutamate + NH4(+) + ATP = L-glutamine + ADP + phosphate + H(+)</text>
        <dbReference type="Rhea" id="RHEA:16169"/>
        <dbReference type="ChEBI" id="CHEBI:15378"/>
        <dbReference type="ChEBI" id="CHEBI:28938"/>
        <dbReference type="ChEBI" id="CHEBI:29985"/>
        <dbReference type="ChEBI" id="CHEBI:30616"/>
        <dbReference type="ChEBI" id="CHEBI:43474"/>
        <dbReference type="ChEBI" id="CHEBI:58359"/>
        <dbReference type="ChEBI" id="CHEBI:456216"/>
        <dbReference type="EC" id="6.3.1.2"/>
    </reaction>
</comment>
<comment type="catalytic activity">
    <reaction evidence="2">
        <text>L-cysteinyl-[protein] + hexadecanoyl-CoA = S-hexadecanoyl-L-cysteinyl-[protein] + CoA</text>
        <dbReference type="Rhea" id="RHEA:36683"/>
        <dbReference type="Rhea" id="RHEA-COMP:10131"/>
        <dbReference type="Rhea" id="RHEA-COMP:11032"/>
        <dbReference type="ChEBI" id="CHEBI:29950"/>
        <dbReference type="ChEBI" id="CHEBI:57287"/>
        <dbReference type="ChEBI" id="CHEBI:57379"/>
        <dbReference type="ChEBI" id="CHEBI:74151"/>
        <dbReference type="EC" id="2.3.1.225"/>
    </reaction>
</comment>
<comment type="cofactor">
    <cofactor evidence="1">
        <name>Mg(2+)</name>
        <dbReference type="ChEBI" id="CHEBI:18420"/>
    </cofactor>
    <cofactor evidence="2">
        <name>Mn(2+)</name>
        <dbReference type="ChEBI" id="CHEBI:29035"/>
    </cofactor>
</comment>
<comment type="activity regulation">
    <text evidence="2">Glutamine synthetase activity is inhibited by methionine sulfoximine (MSO).</text>
</comment>
<comment type="subunit">
    <text evidence="2 3 7">Decamer; composed of two pentamers (PubMed:36289327). Interacts with PALMD (By similarity). Interacts with RHOJ (By similarity). Interacts with BEST2; this interaction tethers a fraction of GLUL to the membrane, causing a decrease of cytosolic glutamine synthase (GS) activity and inhibits the chloride channel activity of BEST2 by affecting the gating at the aperture in the absence of intracellular glutamate (PubMed:36289327).</text>
</comment>
<comment type="subcellular location">
    <subcellularLocation>
        <location evidence="2">Cytoplasm</location>
        <location evidence="2">Cytosol</location>
    </subcellularLocation>
    <subcellularLocation>
        <location evidence="1">Microsome</location>
    </subcellularLocation>
    <subcellularLocation>
        <location evidence="1">Mitochondrion</location>
    </subcellularLocation>
    <subcellularLocation>
        <location evidence="2">Cell membrane</location>
        <topology evidence="2">Lipid-anchor</topology>
    </subcellularLocation>
    <text evidence="2">Mainly localizes in the cytosol, with a fraction associated with the cell membrane.</text>
</comment>
<comment type="PTM">
    <text evidence="2">Palmitoylated; undergoes autopalmitoylation.</text>
</comment>
<comment type="PTM">
    <text evidence="2">Acetylated by EP300/p300; acetylation is stimulated by increased glutamine levels and promotes ubiquitin-mediated proteasomal degradation.</text>
</comment>
<comment type="PTM">
    <text evidence="2 3">Ubiquitinated by ZNRF1 (By similarity). Ubiquitinated by the DCX (DDB1-CUL4-X-box) E3 ubiquitin-protein ligase complex called CRL4(CRBN), leading to proteasomal degradation (By similarity).</text>
</comment>
<comment type="similarity">
    <text evidence="9">Belongs to the glutamine synthetase family.</text>
</comment>
<comment type="sequence caution" evidence="9">
    <conflict type="erroneous gene model prediction">
        <sequence resource="EMBL-CDS" id="CAA71373"/>
    </conflict>
</comment>
<feature type="initiator methionine" description="Removed" evidence="3">
    <location>
        <position position="1"/>
    </location>
</feature>
<feature type="chain" id="PRO_0000153136" description="Glutamine synthetase">
    <location>
        <begin position="2"/>
        <end position="373"/>
    </location>
</feature>
<feature type="domain" description="GS beta-grasp" evidence="5">
    <location>
        <begin position="26"/>
        <end position="106"/>
    </location>
</feature>
<feature type="domain" description="GS catalytic" evidence="6">
    <location>
        <begin position="113"/>
        <end position="373"/>
    </location>
</feature>
<feature type="region of interest" description="Required for glutamine-induced ubiquitination by CRL4(CRBN) and proteasomal degradation" evidence="2">
    <location>
        <begin position="2"/>
        <end position="25"/>
    </location>
</feature>
<feature type="binding site" evidence="2">
    <location>
        <position position="134"/>
    </location>
    <ligand>
        <name>ATP</name>
        <dbReference type="ChEBI" id="CHEBI:30616"/>
    </ligand>
</feature>
<feature type="binding site" evidence="2">
    <location>
        <position position="134"/>
    </location>
    <ligand>
        <name>Mn(2+)</name>
        <dbReference type="ChEBI" id="CHEBI:29035"/>
        <label>1</label>
    </ligand>
</feature>
<feature type="binding site" evidence="2">
    <location>
        <position position="136"/>
    </location>
    <ligand>
        <name>Mn(2+)</name>
        <dbReference type="ChEBI" id="CHEBI:29035"/>
        <label>2</label>
    </ligand>
</feature>
<feature type="binding site" evidence="2">
    <location>
        <position position="196"/>
    </location>
    <ligand>
        <name>Mn(2+)</name>
        <dbReference type="ChEBI" id="CHEBI:29035"/>
        <label>2</label>
    </ligand>
</feature>
<feature type="binding site" evidence="2">
    <location>
        <begin position="203"/>
        <end position="208"/>
    </location>
    <ligand>
        <name>ATP</name>
        <dbReference type="ChEBI" id="CHEBI:30616"/>
    </ligand>
</feature>
<feature type="binding site" evidence="2">
    <location>
        <position position="203"/>
    </location>
    <ligand>
        <name>Mn(2+)</name>
        <dbReference type="ChEBI" id="CHEBI:29035"/>
        <label>2</label>
    </ligand>
</feature>
<feature type="binding site" evidence="4">
    <location>
        <begin position="246"/>
        <end position="247"/>
    </location>
    <ligand>
        <name>L-glutamate</name>
        <dbReference type="ChEBI" id="CHEBI:29985"/>
    </ligand>
</feature>
<feature type="binding site" evidence="2">
    <location>
        <position position="253"/>
    </location>
    <ligand>
        <name>Mn(2+)</name>
        <dbReference type="ChEBI" id="CHEBI:29035"/>
        <label>1</label>
    </ligand>
</feature>
<feature type="binding site" evidence="2">
    <location>
        <begin position="255"/>
        <end position="257"/>
    </location>
    <ligand>
        <name>ATP</name>
        <dbReference type="ChEBI" id="CHEBI:30616"/>
    </ligand>
</feature>
<feature type="binding site" evidence="2">
    <location>
        <position position="319"/>
    </location>
    <ligand>
        <name>ATP</name>
        <dbReference type="ChEBI" id="CHEBI:30616"/>
    </ligand>
</feature>
<feature type="binding site" evidence="4">
    <location>
        <position position="319"/>
    </location>
    <ligand>
        <name>L-glutamate</name>
        <dbReference type="ChEBI" id="CHEBI:29985"/>
    </ligand>
</feature>
<feature type="binding site" evidence="2">
    <location>
        <position position="324"/>
    </location>
    <ligand>
        <name>ATP</name>
        <dbReference type="ChEBI" id="CHEBI:30616"/>
    </ligand>
</feature>
<feature type="binding site" evidence="2">
    <location>
        <begin position="336"/>
        <end position="338"/>
    </location>
    <ligand>
        <name>ADP</name>
        <dbReference type="ChEBI" id="CHEBI:456216"/>
    </ligand>
</feature>
<feature type="binding site" evidence="2">
    <location>
        <position position="338"/>
    </location>
    <ligand>
        <name>Mn(2+)</name>
        <dbReference type="ChEBI" id="CHEBI:29035"/>
        <label>1</label>
    </ligand>
</feature>
<feature type="binding site" evidence="4">
    <location>
        <position position="340"/>
    </location>
    <ligand>
        <name>L-glutamate</name>
        <dbReference type="ChEBI" id="CHEBI:29985"/>
    </ligand>
</feature>
<feature type="modified residue" description="N-acetylalanine" evidence="3">
    <location>
        <position position="2"/>
    </location>
</feature>
<feature type="modified residue" description="N6-acetyllysine" evidence="2">
    <location>
        <position position="11"/>
    </location>
</feature>
<feature type="modified residue" description="N6-acetyllysine" evidence="2">
    <location>
        <position position="14"/>
    </location>
</feature>
<feature type="modified residue" description="Phosphotyrosine" evidence="3">
    <location>
        <position position="104"/>
    </location>
</feature>
<feature type="modified residue" description="Phosphoserine" evidence="2">
    <location>
        <position position="343"/>
    </location>
</feature>
<feature type="helix" evidence="11">
    <location>
        <begin position="6"/>
        <end position="8"/>
    </location>
</feature>
<feature type="helix" evidence="11">
    <location>
        <begin position="11"/>
        <end position="18"/>
    </location>
</feature>
<feature type="strand" evidence="11">
    <location>
        <begin position="26"/>
        <end position="33"/>
    </location>
</feature>
<feature type="strand" evidence="11">
    <location>
        <begin position="40"/>
        <end position="49"/>
    </location>
</feature>
<feature type="helix" evidence="11">
    <location>
        <begin position="54"/>
        <end position="56"/>
    </location>
</feature>
<feature type="strand" evidence="11">
    <location>
        <begin position="60"/>
        <end position="63"/>
    </location>
</feature>
<feature type="helix" evidence="11">
    <location>
        <begin position="64"/>
        <end position="66"/>
    </location>
</feature>
<feature type="strand" evidence="11">
    <location>
        <begin position="76"/>
        <end position="86"/>
    </location>
</feature>
<feature type="turn" evidence="11">
    <location>
        <begin position="88"/>
        <end position="90"/>
    </location>
</feature>
<feature type="strand" evidence="11">
    <location>
        <begin position="95"/>
        <end position="102"/>
    </location>
</feature>
<feature type="helix" evidence="11">
    <location>
        <begin position="114"/>
        <end position="123"/>
    </location>
</feature>
<feature type="helix" evidence="11">
    <location>
        <begin position="125"/>
        <end position="127"/>
    </location>
</feature>
<feature type="strand" evidence="11">
    <location>
        <begin position="130"/>
        <end position="140"/>
    </location>
</feature>
<feature type="strand" evidence="11">
    <location>
        <begin position="144"/>
        <end position="146"/>
    </location>
</feature>
<feature type="strand" evidence="11">
    <location>
        <begin position="158"/>
        <end position="160"/>
    </location>
</feature>
<feature type="turn" evidence="11">
    <location>
        <begin position="167"/>
        <end position="169"/>
    </location>
</feature>
<feature type="helix" evidence="11">
    <location>
        <begin position="173"/>
        <end position="186"/>
    </location>
</feature>
<feature type="strand" evidence="11">
    <location>
        <begin position="190"/>
        <end position="195"/>
    </location>
</feature>
<feature type="strand" evidence="11">
    <location>
        <begin position="201"/>
        <end position="210"/>
    </location>
</feature>
<feature type="helix" evidence="11">
    <location>
        <begin position="213"/>
        <end position="232"/>
    </location>
</feature>
<feature type="strand" evidence="11">
    <location>
        <begin position="235"/>
        <end position="237"/>
    </location>
</feature>
<feature type="strand" evidence="11">
    <location>
        <begin position="245"/>
        <end position="247"/>
    </location>
</feature>
<feature type="strand" evidence="11">
    <location>
        <begin position="251"/>
        <end position="257"/>
    </location>
</feature>
<feature type="helix" evidence="11">
    <location>
        <begin position="259"/>
        <end position="262"/>
    </location>
</feature>
<feature type="turn" evidence="11">
    <location>
        <begin position="264"/>
        <end position="266"/>
    </location>
</feature>
<feature type="helix" evidence="11">
    <location>
        <begin position="267"/>
        <end position="278"/>
    </location>
</feature>
<feature type="helix" evidence="11">
    <location>
        <begin position="281"/>
        <end position="287"/>
    </location>
</feature>
<feature type="turn" evidence="11">
    <location>
        <begin position="290"/>
        <end position="293"/>
    </location>
</feature>
<feature type="helix" evidence="11">
    <location>
        <begin position="295"/>
        <end position="297"/>
    </location>
</feature>
<feature type="strand" evidence="11">
    <location>
        <begin position="301"/>
        <end position="305"/>
    </location>
</feature>
<feature type="strand" evidence="11">
    <location>
        <begin position="314"/>
        <end position="316"/>
    </location>
</feature>
<feature type="strand" evidence="11">
    <location>
        <begin position="321"/>
        <end position="325"/>
    </location>
</feature>
<feature type="helix" evidence="11">
    <location>
        <begin position="327"/>
        <end position="332"/>
    </location>
</feature>
<feature type="strand" evidence="11">
    <location>
        <begin position="337"/>
        <end position="339"/>
    </location>
</feature>
<feature type="helix" evidence="11">
    <location>
        <begin position="348"/>
        <end position="359"/>
    </location>
</feature>
<feature type="strand" evidence="11">
    <location>
        <begin position="365"/>
        <end position="367"/>
    </location>
</feature>
<organism>
    <name type="scientific">Bos taurus</name>
    <name type="common">Bovine</name>
    <dbReference type="NCBI Taxonomy" id="9913"/>
    <lineage>
        <taxon>Eukaryota</taxon>
        <taxon>Metazoa</taxon>
        <taxon>Chordata</taxon>
        <taxon>Craniata</taxon>
        <taxon>Vertebrata</taxon>
        <taxon>Euteleostomi</taxon>
        <taxon>Mammalia</taxon>
        <taxon>Eutheria</taxon>
        <taxon>Laurasiatheria</taxon>
        <taxon>Artiodactyla</taxon>
        <taxon>Ruminantia</taxon>
        <taxon>Pecora</taxon>
        <taxon>Bovidae</taxon>
        <taxon>Bovinae</taxon>
        <taxon>Bos</taxon>
    </lineage>
</organism>
<protein>
    <recommendedName>
        <fullName evidence="8">Glutamine synthetase</fullName>
        <shortName evidence="8">GS</shortName>
        <ecNumber evidence="2">6.3.1.2</ecNumber>
    </recommendedName>
    <alternativeName>
        <fullName evidence="9">Glutamate--ammonia ligase</fullName>
    </alternativeName>
    <alternativeName>
        <fullName evidence="9">Palmitoyltransferase GLUL</fullName>
        <ecNumber evidence="2">2.3.1.225</ecNumber>
    </alternativeName>
</protein>
<gene>
    <name evidence="8" type="primary">GLUL</name>
</gene>
<proteinExistence type="evidence at protein level"/>
<name>GLNA_BOVIN</name>